<proteinExistence type="inferred from homology"/>
<evidence type="ECO:0000255" key="1">
    <source>
        <dbReference type="HAMAP-Rule" id="MF_02002"/>
    </source>
</evidence>
<comment type="function">
    <text evidence="1">Catalyzes the attachment of isoleucine to tRNA(Ile). As IleRS can inadvertently accommodate and process structurally similar amino acids such as valine, to avoid such errors it has two additional distinct tRNA(Ile)-dependent editing activities. One activity is designated as 'pretransfer' editing and involves the hydrolysis of activated Val-AMP. The other activity is designated 'posttransfer' editing and involves deacylation of mischarged Val-tRNA(Ile).</text>
</comment>
<comment type="catalytic activity">
    <reaction evidence="1">
        <text>tRNA(Ile) + L-isoleucine + ATP = L-isoleucyl-tRNA(Ile) + AMP + diphosphate</text>
        <dbReference type="Rhea" id="RHEA:11060"/>
        <dbReference type="Rhea" id="RHEA-COMP:9666"/>
        <dbReference type="Rhea" id="RHEA-COMP:9695"/>
        <dbReference type="ChEBI" id="CHEBI:30616"/>
        <dbReference type="ChEBI" id="CHEBI:33019"/>
        <dbReference type="ChEBI" id="CHEBI:58045"/>
        <dbReference type="ChEBI" id="CHEBI:78442"/>
        <dbReference type="ChEBI" id="CHEBI:78528"/>
        <dbReference type="ChEBI" id="CHEBI:456215"/>
        <dbReference type="EC" id="6.1.1.5"/>
    </reaction>
</comment>
<comment type="cofactor">
    <cofactor evidence="1">
        <name>Zn(2+)</name>
        <dbReference type="ChEBI" id="CHEBI:29105"/>
    </cofactor>
    <text evidence="1">Binds 1 zinc ion per subunit.</text>
</comment>
<comment type="subunit">
    <text evidence="1">Monomer.</text>
</comment>
<comment type="subcellular location">
    <subcellularLocation>
        <location evidence="1">Cytoplasm</location>
    </subcellularLocation>
</comment>
<comment type="domain">
    <text evidence="1">IleRS has two distinct active sites: one for aminoacylation and one for editing. The misactivated valine is translocated from the active site to the editing site, which sterically excludes the correctly activated isoleucine. The single editing site contains two valyl binding pockets, one specific for each substrate (Val-AMP or Val-tRNA(Ile)).</text>
</comment>
<comment type="similarity">
    <text evidence="1">Belongs to the class-I aminoacyl-tRNA synthetase family. IleS type 1 subfamily.</text>
</comment>
<dbReference type="EC" id="6.1.1.5" evidence="1"/>
<dbReference type="EMBL" id="CP001025">
    <property type="protein sequence ID" value="ACB64908.1"/>
    <property type="molecule type" value="Genomic_DNA"/>
</dbReference>
<dbReference type="RefSeq" id="WP_012364516.1">
    <property type="nucleotide sequence ID" value="NC_010551.1"/>
</dbReference>
<dbReference type="SMR" id="B1YVA4"/>
<dbReference type="KEGG" id="bac:BamMC406_2430"/>
<dbReference type="HOGENOM" id="CLU_001493_7_1_4"/>
<dbReference type="OrthoDB" id="9810365at2"/>
<dbReference type="Proteomes" id="UP000001680">
    <property type="component" value="Chromosome 1"/>
</dbReference>
<dbReference type="GO" id="GO:0005829">
    <property type="term" value="C:cytosol"/>
    <property type="evidence" value="ECO:0007669"/>
    <property type="project" value="TreeGrafter"/>
</dbReference>
<dbReference type="GO" id="GO:0002161">
    <property type="term" value="F:aminoacyl-tRNA deacylase activity"/>
    <property type="evidence" value="ECO:0007669"/>
    <property type="project" value="InterPro"/>
</dbReference>
<dbReference type="GO" id="GO:0005524">
    <property type="term" value="F:ATP binding"/>
    <property type="evidence" value="ECO:0007669"/>
    <property type="project" value="UniProtKB-UniRule"/>
</dbReference>
<dbReference type="GO" id="GO:0004822">
    <property type="term" value="F:isoleucine-tRNA ligase activity"/>
    <property type="evidence" value="ECO:0007669"/>
    <property type="project" value="UniProtKB-UniRule"/>
</dbReference>
<dbReference type="GO" id="GO:0000049">
    <property type="term" value="F:tRNA binding"/>
    <property type="evidence" value="ECO:0007669"/>
    <property type="project" value="InterPro"/>
</dbReference>
<dbReference type="GO" id="GO:0008270">
    <property type="term" value="F:zinc ion binding"/>
    <property type="evidence" value="ECO:0007669"/>
    <property type="project" value="UniProtKB-UniRule"/>
</dbReference>
<dbReference type="GO" id="GO:0006428">
    <property type="term" value="P:isoleucyl-tRNA aminoacylation"/>
    <property type="evidence" value="ECO:0007669"/>
    <property type="project" value="UniProtKB-UniRule"/>
</dbReference>
<dbReference type="CDD" id="cd07960">
    <property type="entry name" value="Anticodon_Ia_Ile_BEm"/>
    <property type="match status" value="1"/>
</dbReference>
<dbReference type="CDD" id="cd00818">
    <property type="entry name" value="IleRS_core"/>
    <property type="match status" value="1"/>
</dbReference>
<dbReference type="FunFam" id="1.10.730.20:FF:000001">
    <property type="entry name" value="Isoleucine--tRNA ligase"/>
    <property type="match status" value="1"/>
</dbReference>
<dbReference type="FunFam" id="3.40.50.620:FF:000042">
    <property type="entry name" value="Isoleucine--tRNA ligase"/>
    <property type="match status" value="1"/>
</dbReference>
<dbReference type="FunFam" id="3.40.50.620:FF:000048">
    <property type="entry name" value="Isoleucine--tRNA ligase"/>
    <property type="match status" value="1"/>
</dbReference>
<dbReference type="Gene3D" id="1.10.730.20">
    <property type="match status" value="1"/>
</dbReference>
<dbReference type="Gene3D" id="3.40.50.620">
    <property type="entry name" value="HUPs"/>
    <property type="match status" value="2"/>
</dbReference>
<dbReference type="Gene3D" id="3.90.740.10">
    <property type="entry name" value="Valyl/Leucyl/Isoleucyl-tRNA synthetase, editing domain"/>
    <property type="match status" value="1"/>
</dbReference>
<dbReference type="HAMAP" id="MF_02002">
    <property type="entry name" value="Ile_tRNA_synth_type1"/>
    <property type="match status" value="1"/>
</dbReference>
<dbReference type="InterPro" id="IPR001412">
    <property type="entry name" value="aa-tRNA-synth_I_CS"/>
</dbReference>
<dbReference type="InterPro" id="IPR002300">
    <property type="entry name" value="aa-tRNA-synth_Ia"/>
</dbReference>
<dbReference type="InterPro" id="IPR033708">
    <property type="entry name" value="Anticodon_Ile_BEm"/>
</dbReference>
<dbReference type="InterPro" id="IPR002301">
    <property type="entry name" value="Ile-tRNA-ligase"/>
</dbReference>
<dbReference type="InterPro" id="IPR023585">
    <property type="entry name" value="Ile-tRNA-ligase_type1"/>
</dbReference>
<dbReference type="InterPro" id="IPR050081">
    <property type="entry name" value="Ile-tRNA_ligase"/>
</dbReference>
<dbReference type="InterPro" id="IPR013155">
    <property type="entry name" value="M/V/L/I-tRNA-synth_anticd-bd"/>
</dbReference>
<dbReference type="InterPro" id="IPR014729">
    <property type="entry name" value="Rossmann-like_a/b/a_fold"/>
</dbReference>
<dbReference type="InterPro" id="IPR009080">
    <property type="entry name" value="tRNAsynth_Ia_anticodon-bd"/>
</dbReference>
<dbReference type="InterPro" id="IPR009008">
    <property type="entry name" value="Val/Leu/Ile-tRNA-synth_edit"/>
</dbReference>
<dbReference type="InterPro" id="IPR010663">
    <property type="entry name" value="Znf_FPG/IleRS"/>
</dbReference>
<dbReference type="NCBIfam" id="TIGR00392">
    <property type="entry name" value="ileS"/>
    <property type="match status" value="1"/>
</dbReference>
<dbReference type="PANTHER" id="PTHR42765:SF1">
    <property type="entry name" value="ISOLEUCINE--TRNA LIGASE, MITOCHONDRIAL"/>
    <property type="match status" value="1"/>
</dbReference>
<dbReference type="PANTHER" id="PTHR42765">
    <property type="entry name" value="SOLEUCYL-TRNA SYNTHETASE"/>
    <property type="match status" value="1"/>
</dbReference>
<dbReference type="Pfam" id="PF08264">
    <property type="entry name" value="Anticodon_1"/>
    <property type="match status" value="1"/>
</dbReference>
<dbReference type="Pfam" id="PF00133">
    <property type="entry name" value="tRNA-synt_1"/>
    <property type="match status" value="1"/>
</dbReference>
<dbReference type="Pfam" id="PF06827">
    <property type="entry name" value="zf-FPG_IleRS"/>
    <property type="match status" value="1"/>
</dbReference>
<dbReference type="PRINTS" id="PR00984">
    <property type="entry name" value="TRNASYNTHILE"/>
</dbReference>
<dbReference type="SUPFAM" id="SSF47323">
    <property type="entry name" value="Anticodon-binding domain of a subclass of class I aminoacyl-tRNA synthetases"/>
    <property type="match status" value="1"/>
</dbReference>
<dbReference type="SUPFAM" id="SSF52374">
    <property type="entry name" value="Nucleotidylyl transferase"/>
    <property type="match status" value="1"/>
</dbReference>
<dbReference type="SUPFAM" id="SSF50677">
    <property type="entry name" value="ValRS/IleRS/LeuRS editing domain"/>
    <property type="match status" value="1"/>
</dbReference>
<dbReference type="PROSITE" id="PS00178">
    <property type="entry name" value="AA_TRNA_LIGASE_I"/>
    <property type="match status" value="1"/>
</dbReference>
<sequence>MSNKKADSKPQAKYPVNLLDTPFPMRGDLPKREPQWVKEWEERGIYEKIRAASKGRPKFILHDGPPYANGDIHLGHAVNKILKDIVVKSRNMAGFDAPYVPGWDCHGMPIEIQIEKQFGKSLPAAEVMSKARAYATEQIEKQKVGFKRLGVLGDWANPYKTMNFVNEAEEIRALGKIIEKGYVYRGLKPVNWCFDCGSALAEAEVEYKDRTDPTIDVMFAFAEPEKTAQAFGLPALPRAEGGIVIWTTTPWTIPANQALNLHPEIVYALVDTERGLLIIAEERVAACMADFKLTGRVVATAPGVKLANLRFHHPLASAHPGYKRTAPVYLGDYVTTDTGTGVVHSSPAYGIEDFMSCKAHGMTDSDFINPVMGDGRYIESLPLFGGLSIWDANPKIVDALNVAGSLLRSEKYTHSYMHCWRHKTPIIYRATSQWFAGMDVTPRDDGRTLREAALEGVEATAFYPSWGKQRLFSMIANRPDWTLSRQRQWGVPMAFFVHKETGELHPRTLELLEEVAKRVEQSGIEAWQSLDPRELIGDDANMYEKNRDTLDVWFDSGTTHWHVLRGSHKDQLQFPADLYLEGSDQHRGWFHSSLLTASMIDGRAPYKGLLTHGFTVDGEGRKMSKSLGNGVDPHEVANRLGAEIIRLWIASTDYSGELAISEEILKRVTEGYRRIRNTLRFLLANLSDFDFAQHAVPVDEWLEIDRYAVAFSAQLQTELLGHYEKYEFHPVVAKLQTYCSEDLGGFYLDVLKDRLYTSAADSRARRSAQTALYHLTHGLLRVLAPFLSFTAEEAWKVFQPASDTVFTETYYAYPEVAGSAALIDKWALLRDVRGNVTKALEEARTANRIGSSLQAEVAVHASGARYDALTSLGDDLKFVLITSAATVVKVDDEAQESVDVAASKYQKCERCWHYREDVGAHADHPTLCGRCFSNLFENGEIRSAA</sequence>
<reference key="1">
    <citation type="submission" date="2008-04" db="EMBL/GenBank/DDBJ databases">
        <title>Complete sequence of chromosome 1 of Burkholderia ambifaria MC40-6.</title>
        <authorList>
            <person name="Copeland A."/>
            <person name="Lucas S."/>
            <person name="Lapidus A."/>
            <person name="Glavina del Rio T."/>
            <person name="Dalin E."/>
            <person name="Tice H."/>
            <person name="Pitluck S."/>
            <person name="Chain P."/>
            <person name="Malfatti S."/>
            <person name="Shin M."/>
            <person name="Vergez L."/>
            <person name="Lang D."/>
            <person name="Schmutz J."/>
            <person name="Larimer F."/>
            <person name="Land M."/>
            <person name="Hauser L."/>
            <person name="Kyrpides N."/>
            <person name="Lykidis A."/>
            <person name="Ramette A."/>
            <person name="Konstantinidis K."/>
            <person name="Tiedje J."/>
            <person name="Richardson P."/>
        </authorList>
    </citation>
    <scope>NUCLEOTIDE SEQUENCE [LARGE SCALE GENOMIC DNA]</scope>
    <source>
        <strain>MC40-6</strain>
    </source>
</reference>
<keyword id="KW-0030">Aminoacyl-tRNA synthetase</keyword>
<keyword id="KW-0067">ATP-binding</keyword>
<keyword id="KW-0963">Cytoplasm</keyword>
<keyword id="KW-0436">Ligase</keyword>
<keyword id="KW-0479">Metal-binding</keyword>
<keyword id="KW-0547">Nucleotide-binding</keyword>
<keyword id="KW-0648">Protein biosynthesis</keyword>
<keyword id="KW-0862">Zinc</keyword>
<gene>
    <name evidence="1" type="primary">ileS</name>
    <name type="ordered locus">BamMC406_2430</name>
</gene>
<accession>B1YVA4</accession>
<feature type="chain" id="PRO_1000189135" description="Isoleucine--tRNA ligase">
    <location>
        <begin position="1"/>
        <end position="945"/>
    </location>
</feature>
<feature type="short sequence motif" description="'HIGH' region">
    <location>
        <begin position="66"/>
        <end position="76"/>
    </location>
</feature>
<feature type="short sequence motif" description="'KMSKS' region">
    <location>
        <begin position="622"/>
        <end position="626"/>
    </location>
</feature>
<feature type="binding site" evidence="1">
    <location>
        <position position="581"/>
    </location>
    <ligand>
        <name>L-isoleucyl-5'-AMP</name>
        <dbReference type="ChEBI" id="CHEBI:178002"/>
    </ligand>
</feature>
<feature type="binding site" evidence="1">
    <location>
        <position position="625"/>
    </location>
    <ligand>
        <name>ATP</name>
        <dbReference type="ChEBI" id="CHEBI:30616"/>
    </ligand>
</feature>
<feature type="binding site" evidence="1">
    <location>
        <position position="908"/>
    </location>
    <ligand>
        <name>Zn(2+)</name>
        <dbReference type="ChEBI" id="CHEBI:29105"/>
    </ligand>
</feature>
<feature type="binding site" evidence="1">
    <location>
        <position position="911"/>
    </location>
    <ligand>
        <name>Zn(2+)</name>
        <dbReference type="ChEBI" id="CHEBI:29105"/>
    </ligand>
</feature>
<feature type="binding site" evidence="1">
    <location>
        <position position="928"/>
    </location>
    <ligand>
        <name>Zn(2+)</name>
        <dbReference type="ChEBI" id="CHEBI:29105"/>
    </ligand>
</feature>
<feature type="binding site" evidence="1">
    <location>
        <position position="931"/>
    </location>
    <ligand>
        <name>Zn(2+)</name>
        <dbReference type="ChEBI" id="CHEBI:29105"/>
    </ligand>
</feature>
<name>SYI_BURA4</name>
<organism>
    <name type="scientific">Burkholderia ambifaria (strain MC40-6)</name>
    <dbReference type="NCBI Taxonomy" id="398577"/>
    <lineage>
        <taxon>Bacteria</taxon>
        <taxon>Pseudomonadati</taxon>
        <taxon>Pseudomonadota</taxon>
        <taxon>Betaproteobacteria</taxon>
        <taxon>Burkholderiales</taxon>
        <taxon>Burkholderiaceae</taxon>
        <taxon>Burkholderia</taxon>
        <taxon>Burkholderia cepacia complex</taxon>
    </lineage>
</organism>
<protein>
    <recommendedName>
        <fullName evidence="1">Isoleucine--tRNA ligase</fullName>
        <ecNumber evidence="1">6.1.1.5</ecNumber>
    </recommendedName>
    <alternativeName>
        <fullName evidence="1">Isoleucyl-tRNA synthetase</fullName>
        <shortName evidence="1">IleRS</shortName>
    </alternativeName>
</protein>